<accession>A4VZE3</accession>
<comment type="function">
    <text evidence="1">Involved in protein export. Acts as a chaperone by maintaining the newly synthesized protein in an open conformation. Functions as a peptidyl-prolyl cis-trans isomerase.</text>
</comment>
<comment type="catalytic activity">
    <reaction evidence="1">
        <text>[protein]-peptidylproline (omega=180) = [protein]-peptidylproline (omega=0)</text>
        <dbReference type="Rhea" id="RHEA:16237"/>
        <dbReference type="Rhea" id="RHEA-COMP:10747"/>
        <dbReference type="Rhea" id="RHEA-COMP:10748"/>
        <dbReference type="ChEBI" id="CHEBI:83833"/>
        <dbReference type="ChEBI" id="CHEBI:83834"/>
        <dbReference type="EC" id="5.2.1.8"/>
    </reaction>
</comment>
<comment type="subcellular location">
    <subcellularLocation>
        <location>Cytoplasm</location>
    </subcellularLocation>
    <text evidence="1">About half TF is bound to the ribosome near the polypeptide exit tunnel while the other half is free in the cytoplasm.</text>
</comment>
<comment type="domain">
    <text evidence="1">Consists of 3 domains; the N-terminus binds the ribosome, the middle domain has PPIase activity, while the C-terminus has intrinsic chaperone activity on its own.</text>
</comment>
<comment type="similarity">
    <text evidence="1">Belongs to the FKBP-type PPIase family. Tig subfamily.</text>
</comment>
<protein>
    <recommendedName>
        <fullName evidence="1">Trigger factor</fullName>
        <shortName evidence="1">TF</shortName>
        <ecNumber evidence="1">5.2.1.8</ecNumber>
    </recommendedName>
    <alternativeName>
        <fullName evidence="1">PPIase</fullName>
    </alternativeName>
</protein>
<sequence>MSVSFEAKETNRGVLTFTIGQDAIKPELDRVFNKVKKDINLPGFRKGHLPRAVFNQKFGEEALYQDVVNALLPAAYEAAVAEAGLEVVAQPKIDVVSMEKGQDWTITAEVVTKPEVKLGDYKNLAVSVEATKEVTDEEVDAKIEAARNNLAELVIKEGPATEGDTVVIDFVGSIDGVEFDGGKGENFSLGLGSGQFIPGFEAQLVGHAAGEEVNVEVTFPEDYQAADLAGKQALFVTKIHEVKAKEVPALDDELAKDIDEEVETLDELKAKYRKELEASKEVAFDDAVESAALELAVENAEIVELPEEMIHEEVHRAINEFLGGMQQQGISPDMYFQITGTTREDLHKQYEADAEKRTKTNLVVEAVAKAEGFEATEEEINKEIEDLAATYNMEVAQVRSLLSPEMLKHDIAVKKAVEVITSTATVK</sequence>
<proteinExistence type="inferred from homology"/>
<gene>
    <name evidence="1" type="primary">tig</name>
    <name type="ordered locus">SSU98_0324</name>
</gene>
<dbReference type="EC" id="5.2.1.8" evidence="1"/>
<dbReference type="EMBL" id="CP000408">
    <property type="protein sequence ID" value="ABP91482.1"/>
    <property type="molecule type" value="Genomic_DNA"/>
</dbReference>
<dbReference type="SMR" id="A4VZE3"/>
<dbReference type="KEGG" id="ssv:SSU98_0324"/>
<dbReference type="HOGENOM" id="CLU_033058_3_2_9"/>
<dbReference type="GO" id="GO:0005737">
    <property type="term" value="C:cytoplasm"/>
    <property type="evidence" value="ECO:0007669"/>
    <property type="project" value="UniProtKB-SubCell"/>
</dbReference>
<dbReference type="GO" id="GO:0003755">
    <property type="term" value="F:peptidyl-prolyl cis-trans isomerase activity"/>
    <property type="evidence" value="ECO:0007669"/>
    <property type="project" value="UniProtKB-UniRule"/>
</dbReference>
<dbReference type="GO" id="GO:0044183">
    <property type="term" value="F:protein folding chaperone"/>
    <property type="evidence" value="ECO:0007669"/>
    <property type="project" value="TreeGrafter"/>
</dbReference>
<dbReference type="GO" id="GO:0043022">
    <property type="term" value="F:ribosome binding"/>
    <property type="evidence" value="ECO:0007669"/>
    <property type="project" value="TreeGrafter"/>
</dbReference>
<dbReference type="GO" id="GO:0051083">
    <property type="term" value="P:'de novo' cotranslational protein folding"/>
    <property type="evidence" value="ECO:0007669"/>
    <property type="project" value="TreeGrafter"/>
</dbReference>
<dbReference type="GO" id="GO:0051301">
    <property type="term" value="P:cell division"/>
    <property type="evidence" value="ECO:0007669"/>
    <property type="project" value="UniProtKB-KW"/>
</dbReference>
<dbReference type="GO" id="GO:0061077">
    <property type="term" value="P:chaperone-mediated protein folding"/>
    <property type="evidence" value="ECO:0007669"/>
    <property type="project" value="TreeGrafter"/>
</dbReference>
<dbReference type="GO" id="GO:0015031">
    <property type="term" value="P:protein transport"/>
    <property type="evidence" value="ECO:0007669"/>
    <property type="project" value="UniProtKB-UniRule"/>
</dbReference>
<dbReference type="GO" id="GO:0043335">
    <property type="term" value="P:protein unfolding"/>
    <property type="evidence" value="ECO:0007669"/>
    <property type="project" value="TreeGrafter"/>
</dbReference>
<dbReference type="FunFam" id="3.10.50.40:FF:000001">
    <property type="entry name" value="Trigger factor"/>
    <property type="match status" value="1"/>
</dbReference>
<dbReference type="Gene3D" id="3.10.50.40">
    <property type="match status" value="1"/>
</dbReference>
<dbReference type="Gene3D" id="3.30.70.1050">
    <property type="entry name" value="Trigger factor ribosome-binding domain"/>
    <property type="match status" value="1"/>
</dbReference>
<dbReference type="Gene3D" id="1.10.3120.10">
    <property type="entry name" value="Trigger factor, C-terminal domain"/>
    <property type="match status" value="1"/>
</dbReference>
<dbReference type="HAMAP" id="MF_00303">
    <property type="entry name" value="Trigger_factor_Tig"/>
    <property type="match status" value="1"/>
</dbReference>
<dbReference type="InterPro" id="IPR046357">
    <property type="entry name" value="PPIase_dom_sf"/>
</dbReference>
<dbReference type="InterPro" id="IPR001179">
    <property type="entry name" value="PPIase_FKBP_dom"/>
</dbReference>
<dbReference type="InterPro" id="IPR005215">
    <property type="entry name" value="Trig_fac"/>
</dbReference>
<dbReference type="InterPro" id="IPR008880">
    <property type="entry name" value="Trigger_fac_C"/>
</dbReference>
<dbReference type="InterPro" id="IPR037041">
    <property type="entry name" value="Trigger_fac_C_sf"/>
</dbReference>
<dbReference type="InterPro" id="IPR008881">
    <property type="entry name" value="Trigger_fac_ribosome-bd_bac"/>
</dbReference>
<dbReference type="InterPro" id="IPR036611">
    <property type="entry name" value="Trigger_fac_ribosome-bd_sf"/>
</dbReference>
<dbReference type="InterPro" id="IPR027304">
    <property type="entry name" value="Trigger_fact/SurA_dom_sf"/>
</dbReference>
<dbReference type="NCBIfam" id="TIGR00115">
    <property type="entry name" value="tig"/>
    <property type="match status" value="1"/>
</dbReference>
<dbReference type="PANTHER" id="PTHR30560">
    <property type="entry name" value="TRIGGER FACTOR CHAPERONE AND PEPTIDYL-PROLYL CIS/TRANS ISOMERASE"/>
    <property type="match status" value="1"/>
</dbReference>
<dbReference type="PANTHER" id="PTHR30560:SF3">
    <property type="entry name" value="TRIGGER FACTOR-LIKE PROTEIN TIG, CHLOROPLASTIC"/>
    <property type="match status" value="1"/>
</dbReference>
<dbReference type="Pfam" id="PF00254">
    <property type="entry name" value="FKBP_C"/>
    <property type="match status" value="1"/>
</dbReference>
<dbReference type="Pfam" id="PF05698">
    <property type="entry name" value="Trigger_C"/>
    <property type="match status" value="1"/>
</dbReference>
<dbReference type="Pfam" id="PF05697">
    <property type="entry name" value="Trigger_N"/>
    <property type="match status" value="1"/>
</dbReference>
<dbReference type="PIRSF" id="PIRSF003095">
    <property type="entry name" value="Trigger_factor"/>
    <property type="match status" value="1"/>
</dbReference>
<dbReference type="SUPFAM" id="SSF54534">
    <property type="entry name" value="FKBP-like"/>
    <property type="match status" value="1"/>
</dbReference>
<dbReference type="SUPFAM" id="SSF109998">
    <property type="entry name" value="Triger factor/SurA peptide-binding domain-like"/>
    <property type="match status" value="1"/>
</dbReference>
<dbReference type="SUPFAM" id="SSF102735">
    <property type="entry name" value="Trigger factor ribosome-binding domain"/>
    <property type="match status" value="1"/>
</dbReference>
<dbReference type="PROSITE" id="PS50059">
    <property type="entry name" value="FKBP_PPIASE"/>
    <property type="match status" value="1"/>
</dbReference>
<feature type="chain" id="PRO_1000022768" description="Trigger factor">
    <location>
        <begin position="1"/>
        <end position="427"/>
    </location>
</feature>
<feature type="domain" description="PPIase FKBP-type" evidence="1">
    <location>
        <begin position="163"/>
        <end position="248"/>
    </location>
</feature>
<keyword id="KW-0131">Cell cycle</keyword>
<keyword id="KW-0132">Cell division</keyword>
<keyword id="KW-0143">Chaperone</keyword>
<keyword id="KW-0963">Cytoplasm</keyword>
<keyword id="KW-0413">Isomerase</keyword>
<keyword id="KW-0697">Rotamase</keyword>
<evidence type="ECO:0000255" key="1">
    <source>
        <dbReference type="HAMAP-Rule" id="MF_00303"/>
    </source>
</evidence>
<name>TIG_STRS2</name>
<organism>
    <name type="scientific">Streptococcus suis (strain 98HAH33)</name>
    <dbReference type="NCBI Taxonomy" id="391296"/>
    <lineage>
        <taxon>Bacteria</taxon>
        <taxon>Bacillati</taxon>
        <taxon>Bacillota</taxon>
        <taxon>Bacilli</taxon>
        <taxon>Lactobacillales</taxon>
        <taxon>Streptococcaceae</taxon>
        <taxon>Streptococcus</taxon>
    </lineage>
</organism>
<reference key="1">
    <citation type="journal article" date="2007" name="PLoS ONE">
        <title>A glimpse of streptococcal toxic shock syndrome from comparative genomics of S. suis 2 Chinese isolates.</title>
        <authorList>
            <person name="Chen C."/>
            <person name="Tang J."/>
            <person name="Dong W."/>
            <person name="Wang C."/>
            <person name="Feng Y."/>
            <person name="Wang J."/>
            <person name="Zheng F."/>
            <person name="Pan X."/>
            <person name="Liu D."/>
            <person name="Li M."/>
            <person name="Song Y."/>
            <person name="Zhu X."/>
            <person name="Sun H."/>
            <person name="Feng T."/>
            <person name="Guo Z."/>
            <person name="Ju A."/>
            <person name="Ge J."/>
            <person name="Dong Y."/>
            <person name="Sun W."/>
            <person name="Jiang Y."/>
            <person name="Wang J."/>
            <person name="Yan J."/>
            <person name="Yang H."/>
            <person name="Wang X."/>
            <person name="Gao G.F."/>
            <person name="Yang R."/>
            <person name="Wang J."/>
            <person name="Yu J."/>
        </authorList>
    </citation>
    <scope>NUCLEOTIDE SEQUENCE [LARGE SCALE GENOMIC DNA]</scope>
    <source>
        <strain>98HAH33</strain>
    </source>
</reference>